<organism>
    <name type="scientific">Christiangramia forsetii (strain DSM 17595 / CGMCC 1.15422 / KT0803)</name>
    <name type="common">Gramella forsetii</name>
    <dbReference type="NCBI Taxonomy" id="411154"/>
    <lineage>
        <taxon>Bacteria</taxon>
        <taxon>Pseudomonadati</taxon>
        <taxon>Bacteroidota</taxon>
        <taxon>Flavobacteriia</taxon>
        <taxon>Flavobacteriales</taxon>
        <taxon>Flavobacteriaceae</taxon>
        <taxon>Christiangramia</taxon>
    </lineage>
</organism>
<comment type="function">
    <text evidence="1">Catalyzes the condensation of carbamoyl phosphate and aspartate to form carbamoyl aspartate and inorganic phosphate, the committed step in the de novo pyrimidine nucleotide biosynthesis pathway.</text>
</comment>
<comment type="catalytic activity">
    <reaction evidence="1">
        <text>carbamoyl phosphate + L-aspartate = N-carbamoyl-L-aspartate + phosphate + H(+)</text>
        <dbReference type="Rhea" id="RHEA:20013"/>
        <dbReference type="ChEBI" id="CHEBI:15378"/>
        <dbReference type="ChEBI" id="CHEBI:29991"/>
        <dbReference type="ChEBI" id="CHEBI:32814"/>
        <dbReference type="ChEBI" id="CHEBI:43474"/>
        <dbReference type="ChEBI" id="CHEBI:58228"/>
        <dbReference type="EC" id="2.1.3.2"/>
    </reaction>
</comment>
<comment type="pathway">
    <text evidence="1">Pyrimidine metabolism; UMP biosynthesis via de novo pathway; (S)-dihydroorotate from bicarbonate: step 2/3.</text>
</comment>
<comment type="subunit">
    <text evidence="1">Heterododecamer (2C3:3R2) of six catalytic PyrB chains organized as two trimers (C3), and six regulatory PyrI chains organized as three dimers (R2).</text>
</comment>
<comment type="similarity">
    <text evidence="1">Belongs to the aspartate/ornithine carbamoyltransferase superfamily. ATCase family.</text>
</comment>
<accession>A0M2G8</accession>
<reference key="1">
    <citation type="journal article" date="2006" name="Environ. Microbiol.">
        <title>Whole genome analysis of the marine Bacteroidetes'Gramella forsetii' reveals adaptations to degradation of polymeric organic matter.</title>
        <authorList>
            <person name="Bauer M."/>
            <person name="Kube M."/>
            <person name="Teeling H."/>
            <person name="Richter M."/>
            <person name="Lombardot T."/>
            <person name="Allers E."/>
            <person name="Wuerdemann C.A."/>
            <person name="Quast C."/>
            <person name="Kuhl H."/>
            <person name="Knaust F."/>
            <person name="Woebken D."/>
            <person name="Bischof K."/>
            <person name="Mussmann M."/>
            <person name="Choudhuri J.V."/>
            <person name="Meyer F."/>
            <person name="Reinhardt R."/>
            <person name="Amann R.I."/>
            <person name="Gloeckner F.O."/>
        </authorList>
    </citation>
    <scope>NUCLEOTIDE SEQUENCE [LARGE SCALE GENOMIC DNA]</scope>
    <source>
        <strain>DSM 17595 / CGMCC 1.15422 / KT0803</strain>
    </source>
</reference>
<feature type="chain" id="PRO_0000321104" description="Aspartate carbamoyltransferase catalytic subunit">
    <location>
        <begin position="1"/>
        <end position="310"/>
    </location>
</feature>
<feature type="binding site" evidence="1">
    <location>
        <position position="60"/>
    </location>
    <ligand>
        <name>carbamoyl phosphate</name>
        <dbReference type="ChEBI" id="CHEBI:58228"/>
    </ligand>
</feature>
<feature type="binding site" evidence="1">
    <location>
        <position position="61"/>
    </location>
    <ligand>
        <name>carbamoyl phosphate</name>
        <dbReference type="ChEBI" id="CHEBI:58228"/>
    </ligand>
</feature>
<feature type="binding site" evidence="1">
    <location>
        <position position="88"/>
    </location>
    <ligand>
        <name>L-aspartate</name>
        <dbReference type="ChEBI" id="CHEBI:29991"/>
    </ligand>
</feature>
<feature type="binding site" evidence="1">
    <location>
        <position position="110"/>
    </location>
    <ligand>
        <name>carbamoyl phosphate</name>
        <dbReference type="ChEBI" id="CHEBI:58228"/>
    </ligand>
</feature>
<feature type="binding site" evidence="1">
    <location>
        <position position="138"/>
    </location>
    <ligand>
        <name>carbamoyl phosphate</name>
        <dbReference type="ChEBI" id="CHEBI:58228"/>
    </ligand>
</feature>
<feature type="binding site" evidence="1">
    <location>
        <position position="141"/>
    </location>
    <ligand>
        <name>carbamoyl phosphate</name>
        <dbReference type="ChEBI" id="CHEBI:58228"/>
    </ligand>
</feature>
<feature type="binding site" evidence="1">
    <location>
        <position position="171"/>
    </location>
    <ligand>
        <name>L-aspartate</name>
        <dbReference type="ChEBI" id="CHEBI:29991"/>
    </ligand>
</feature>
<feature type="binding site" evidence="1">
    <location>
        <position position="225"/>
    </location>
    <ligand>
        <name>L-aspartate</name>
        <dbReference type="ChEBI" id="CHEBI:29991"/>
    </ligand>
</feature>
<feature type="binding site" evidence="1">
    <location>
        <position position="266"/>
    </location>
    <ligand>
        <name>carbamoyl phosphate</name>
        <dbReference type="ChEBI" id="CHEBI:58228"/>
    </ligand>
</feature>
<feature type="binding site" evidence="1">
    <location>
        <position position="267"/>
    </location>
    <ligand>
        <name>carbamoyl phosphate</name>
        <dbReference type="ChEBI" id="CHEBI:58228"/>
    </ligand>
</feature>
<protein>
    <recommendedName>
        <fullName evidence="1">Aspartate carbamoyltransferase catalytic subunit</fullName>
        <ecNumber evidence="1">2.1.3.2</ecNumber>
    </recommendedName>
    <alternativeName>
        <fullName evidence="1">Aspartate transcarbamylase</fullName>
        <shortName evidence="1">ATCase</shortName>
    </alternativeName>
</protein>
<dbReference type="EC" id="2.1.3.2" evidence="1"/>
<dbReference type="EMBL" id="CU207366">
    <property type="protein sequence ID" value="CAL66813.1"/>
    <property type="molecule type" value="Genomic_DNA"/>
</dbReference>
<dbReference type="RefSeq" id="WP_011709721.1">
    <property type="nucleotide sequence ID" value="NC_008571.1"/>
</dbReference>
<dbReference type="SMR" id="A0M2G8"/>
<dbReference type="STRING" id="411154.GFO_1843"/>
<dbReference type="KEGG" id="gfo:GFO_1843"/>
<dbReference type="eggNOG" id="COG0540">
    <property type="taxonomic scope" value="Bacteria"/>
</dbReference>
<dbReference type="HOGENOM" id="CLU_043846_2_0_10"/>
<dbReference type="OrthoDB" id="9774690at2"/>
<dbReference type="UniPathway" id="UPA00070">
    <property type="reaction ID" value="UER00116"/>
</dbReference>
<dbReference type="Proteomes" id="UP000000755">
    <property type="component" value="Chromosome"/>
</dbReference>
<dbReference type="GO" id="GO:0016597">
    <property type="term" value="F:amino acid binding"/>
    <property type="evidence" value="ECO:0007669"/>
    <property type="project" value="InterPro"/>
</dbReference>
<dbReference type="GO" id="GO:0004070">
    <property type="term" value="F:aspartate carbamoyltransferase activity"/>
    <property type="evidence" value="ECO:0007669"/>
    <property type="project" value="UniProtKB-UniRule"/>
</dbReference>
<dbReference type="GO" id="GO:0006207">
    <property type="term" value="P:'de novo' pyrimidine nucleobase biosynthetic process"/>
    <property type="evidence" value="ECO:0007669"/>
    <property type="project" value="InterPro"/>
</dbReference>
<dbReference type="GO" id="GO:0044205">
    <property type="term" value="P:'de novo' UMP biosynthetic process"/>
    <property type="evidence" value="ECO:0007669"/>
    <property type="project" value="UniProtKB-UniRule"/>
</dbReference>
<dbReference type="GO" id="GO:0006520">
    <property type="term" value="P:amino acid metabolic process"/>
    <property type="evidence" value="ECO:0007669"/>
    <property type="project" value="InterPro"/>
</dbReference>
<dbReference type="Gene3D" id="3.40.50.1370">
    <property type="entry name" value="Aspartate/ornithine carbamoyltransferase"/>
    <property type="match status" value="2"/>
</dbReference>
<dbReference type="HAMAP" id="MF_00001">
    <property type="entry name" value="Asp_carb_tr"/>
    <property type="match status" value="1"/>
</dbReference>
<dbReference type="InterPro" id="IPR006132">
    <property type="entry name" value="Asp/Orn_carbamoyltranf_P-bd"/>
</dbReference>
<dbReference type="InterPro" id="IPR006130">
    <property type="entry name" value="Asp/Orn_carbamoylTrfase"/>
</dbReference>
<dbReference type="InterPro" id="IPR036901">
    <property type="entry name" value="Asp/Orn_carbamoylTrfase_sf"/>
</dbReference>
<dbReference type="InterPro" id="IPR002082">
    <property type="entry name" value="Asp_carbamoyltransf"/>
</dbReference>
<dbReference type="InterPro" id="IPR006131">
    <property type="entry name" value="Asp_carbamoyltransf_Asp/Orn-bd"/>
</dbReference>
<dbReference type="NCBIfam" id="TIGR00670">
    <property type="entry name" value="asp_carb_tr"/>
    <property type="match status" value="1"/>
</dbReference>
<dbReference type="NCBIfam" id="NF002032">
    <property type="entry name" value="PRK00856.1"/>
    <property type="match status" value="1"/>
</dbReference>
<dbReference type="PANTHER" id="PTHR45753:SF6">
    <property type="entry name" value="ASPARTATE CARBAMOYLTRANSFERASE"/>
    <property type="match status" value="1"/>
</dbReference>
<dbReference type="PANTHER" id="PTHR45753">
    <property type="entry name" value="ORNITHINE CARBAMOYLTRANSFERASE, MITOCHONDRIAL"/>
    <property type="match status" value="1"/>
</dbReference>
<dbReference type="Pfam" id="PF00185">
    <property type="entry name" value="OTCace"/>
    <property type="match status" value="1"/>
</dbReference>
<dbReference type="Pfam" id="PF02729">
    <property type="entry name" value="OTCace_N"/>
    <property type="match status" value="1"/>
</dbReference>
<dbReference type="PRINTS" id="PR00100">
    <property type="entry name" value="AOTCASE"/>
</dbReference>
<dbReference type="PRINTS" id="PR00101">
    <property type="entry name" value="ATCASE"/>
</dbReference>
<dbReference type="SUPFAM" id="SSF53671">
    <property type="entry name" value="Aspartate/ornithine carbamoyltransferase"/>
    <property type="match status" value="1"/>
</dbReference>
<dbReference type="PROSITE" id="PS00097">
    <property type="entry name" value="CARBAMOYLTRANSFERASE"/>
    <property type="match status" value="1"/>
</dbReference>
<keyword id="KW-0665">Pyrimidine biosynthesis</keyword>
<keyword id="KW-0808">Transferase</keyword>
<name>PYRB_CHRFK</name>
<sequence length="310" mass="34387">MSSELSVDHLLGIKYLKPEDIELIFKTADHFKEVINRPIKKVPSLRDITIANLFFENSTRTRLSFELAEKRLSADVINFSAASSSVKKGETLIDTVNNILSMKVDMVVMRHPNPGAGIFLSKHVDASIINAGDGAHEHPTQALLDSYSIREKLGDVRGKKVVIVGDILHSRVALSNIFALKLQGAEVKVCGPKTLLPKHIESLGVGVEMNLKTALEWCDVANMLRVQNERMDISYFPSTREYVKQFGLNKKLLDSLKKEIVIMHPGPINRGVEITSDVADSEHAIILDQVQNGVAVRMAVIYLLASKIKQ</sequence>
<evidence type="ECO:0000255" key="1">
    <source>
        <dbReference type="HAMAP-Rule" id="MF_00001"/>
    </source>
</evidence>
<proteinExistence type="inferred from homology"/>
<gene>
    <name evidence="1" type="primary">pyrB</name>
    <name type="ordered locus">GFO_1843</name>
</gene>